<dbReference type="EMBL" id="BX897700">
    <property type="protein sequence ID" value="CAF26205.1"/>
    <property type="molecule type" value="Genomic_DNA"/>
</dbReference>
<dbReference type="RefSeq" id="WP_011179459.1">
    <property type="nucleotide sequence ID" value="NC_005955.1"/>
</dbReference>
<dbReference type="SMR" id="Q6FZL6"/>
<dbReference type="KEGG" id="bqu:BQ07160"/>
<dbReference type="eggNOG" id="COG0081">
    <property type="taxonomic scope" value="Bacteria"/>
</dbReference>
<dbReference type="HOGENOM" id="CLU_062853_0_0_5"/>
<dbReference type="OrthoDB" id="9803740at2"/>
<dbReference type="Proteomes" id="UP000000597">
    <property type="component" value="Chromosome"/>
</dbReference>
<dbReference type="GO" id="GO:0022625">
    <property type="term" value="C:cytosolic large ribosomal subunit"/>
    <property type="evidence" value="ECO:0007669"/>
    <property type="project" value="TreeGrafter"/>
</dbReference>
<dbReference type="GO" id="GO:0019843">
    <property type="term" value="F:rRNA binding"/>
    <property type="evidence" value="ECO:0007669"/>
    <property type="project" value="UniProtKB-UniRule"/>
</dbReference>
<dbReference type="GO" id="GO:0003735">
    <property type="term" value="F:structural constituent of ribosome"/>
    <property type="evidence" value="ECO:0007669"/>
    <property type="project" value="InterPro"/>
</dbReference>
<dbReference type="GO" id="GO:0000049">
    <property type="term" value="F:tRNA binding"/>
    <property type="evidence" value="ECO:0007669"/>
    <property type="project" value="UniProtKB-KW"/>
</dbReference>
<dbReference type="GO" id="GO:0006417">
    <property type="term" value="P:regulation of translation"/>
    <property type="evidence" value="ECO:0007669"/>
    <property type="project" value="UniProtKB-KW"/>
</dbReference>
<dbReference type="GO" id="GO:0006412">
    <property type="term" value="P:translation"/>
    <property type="evidence" value="ECO:0007669"/>
    <property type="project" value="UniProtKB-UniRule"/>
</dbReference>
<dbReference type="CDD" id="cd00403">
    <property type="entry name" value="Ribosomal_L1"/>
    <property type="match status" value="1"/>
</dbReference>
<dbReference type="FunFam" id="3.40.50.790:FF:000001">
    <property type="entry name" value="50S ribosomal protein L1"/>
    <property type="match status" value="1"/>
</dbReference>
<dbReference type="Gene3D" id="3.30.190.20">
    <property type="match status" value="1"/>
</dbReference>
<dbReference type="Gene3D" id="3.40.50.790">
    <property type="match status" value="1"/>
</dbReference>
<dbReference type="HAMAP" id="MF_01318_B">
    <property type="entry name" value="Ribosomal_uL1_B"/>
    <property type="match status" value="1"/>
</dbReference>
<dbReference type="InterPro" id="IPR005878">
    <property type="entry name" value="Ribosom_uL1_bac-type"/>
</dbReference>
<dbReference type="InterPro" id="IPR002143">
    <property type="entry name" value="Ribosomal_uL1"/>
</dbReference>
<dbReference type="InterPro" id="IPR023674">
    <property type="entry name" value="Ribosomal_uL1-like"/>
</dbReference>
<dbReference type="InterPro" id="IPR028364">
    <property type="entry name" value="Ribosomal_uL1/biogenesis"/>
</dbReference>
<dbReference type="InterPro" id="IPR016095">
    <property type="entry name" value="Ribosomal_uL1_3-a/b-sand"/>
</dbReference>
<dbReference type="InterPro" id="IPR023673">
    <property type="entry name" value="Ribosomal_uL1_CS"/>
</dbReference>
<dbReference type="NCBIfam" id="TIGR01169">
    <property type="entry name" value="rplA_bact"/>
    <property type="match status" value="1"/>
</dbReference>
<dbReference type="PANTHER" id="PTHR36427">
    <property type="entry name" value="54S RIBOSOMAL PROTEIN L1, MITOCHONDRIAL"/>
    <property type="match status" value="1"/>
</dbReference>
<dbReference type="PANTHER" id="PTHR36427:SF3">
    <property type="entry name" value="LARGE RIBOSOMAL SUBUNIT PROTEIN UL1M"/>
    <property type="match status" value="1"/>
</dbReference>
<dbReference type="Pfam" id="PF00687">
    <property type="entry name" value="Ribosomal_L1"/>
    <property type="match status" value="1"/>
</dbReference>
<dbReference type="PIRSF" id="PIRSF002155">
    <property type="entry name" value="Ribosomal_L1"/>
    <property type="match status" value="1"/>
</dbReference>
<dbReference type="SUPFAM" id="SSF56808">
    <property type="entry name" value="Ribosomal protein L1"/>
    <property type="match status" value="1"/>
</dbReference>
<dbReference type="PROSITE" id="PS01199">
    <property type="entry name" value="RIBOSOMAL_L1"/>
    <property type="match status" value="1"/>
</dbReference>
<reference key="1">
    <citation type="journal article" date="2004" name="Proc. Natl. Acad. Sci. U.S.A.">
        <title>The louse-borne human pathogen Bartonella quintana is a genomic derivative of the zoonotic agent Bartonella henselae.</title>
        <authorList>
            <person name="Alsmark U.C.M."/>
            <person name="Frank A.C."/>
            <person name="Karlberg E.O."/>
            <person name="Legault B.-A."/>
            <person name="Ardell D.H."/>
            <person name="Canbaeck B."/>
            <person name="Eriksson A.-S."/>
            <person name="Naeslund A.K."/>
            <person name="Handley S.A."/>
            <person name="Huvet M."/>
            <person name="La Scola B."/>
            <person name="Holmberg M."/>
            <person name="Andersson S.G.E."/>
        </authorList>
    </citation>
    <scope>NUCLEOTIDE SEQUENCE [LARGE SCALE GENOMIC DNA]</scope>
    <source>
        <strain>Toulouse</strain>
    </source>
</reference>
<proteinExistence type="inferred from homology"/>
<gene>
    <name evidence="1" type="primary">rplA</name>
    <name type="ordered locus">BQ07160</name>
</gene>
<keyword id="KW-0678">Repressor</keyword>
<keyword id="KW-0687">Ribonucleoprotein</keyword>
<keyword id="KW-0689">Ribosomal protein</keyword>
<keyword id="KW-0694">RNA-binding</keyword>
<keyword id="KW-0699">rRNA-binding</keyword>
<keyword id="KW-0810">Translation regulation</keyword>
<keyword id="KW-0820">tRNA-binding</keyword>
<organism>
    <name type="scientific">Bartonella quintana (strain Toulouse)</name>
    <name type="common">Rochalimaea quintana</name>
    <dbReference type="NCBI Taxonomy" id="283165"/>
    <lineage>
        <taxon>Bacteria</taxon>
        <taxon>Pseudomonadati</taxon>
        <taxon>Pseudomonadota</taxon>
        <taxon>Alphaproteobacteria</taxon>
        <taxon>Hyphomicrobiales</taxon>
        <taxon>Bartonellaceae</taxon>
        <taxon>Bartonella</taxon>
    </lineage>
</organism>
<sequence length="232" mass="24774">MRKVAKRIKDIRKDIDFNELYALKDAVSMVKERAVAKFDETIEISMNLGVDPRHADQMVRGVAHLPNGTGRNVRVAVFARGEKAEEAKASGADIVGAEDLFESINSGTIDFDRCIATPDMMLLVGRLGKILGPRNLMPNPKVGTVTLDVANAVKASKGGAVEFRVEKAGIVHAGIGKASFGVEKIVENIKAFASAVIKARPQGAKGEYIKRVAVSSTMGIGIKVDPATVCSE</sequence>
<evidence type="ECO:0000255" key="1">
    <source>
        <dbReference type="HAMAP-Rule" id="MF_01318"/>
    </source>
</evidence>
<evidence type="ECO:0000305" key="2"/>
<name>RL1_BARQU</name>
<comment type="function">
    <text evidence="1">Binds directly to 23S rRNA. The L1 stalk is quite mobile in the ribosome, and is involved in E site tRNA release.</text>
</comment>
<comment type="function">
    <text evidence="1">Protein L1 is also a translational repressor protein, it controls the translation of the L11 operon by binding to its mRNA.</text>
</comment>
<comment type="subunit">
    <text evidence="1">Part of the 50S ribosomal subunit.</text>
</comment>
<comment type="similarity">
    <text evidence="1">Belongs to the universal ribosomal protein uL1 family.</text>
</comment>
<accession>Q6FZL6</accession>
<protein>
    <recommendedName>
        <fullName evidence="1">Large ribosomal subunit protein uL1</fullName>
    </recommendedName>
    <alternativeName>
        <fullName evidence="2">50S ribosomal protein L1</fullName>
    </alternativeName>
</protein>
<feature type="chain" id="PRO_0000125619" description="Large ribosomal subunit protein uL1">
    <location>
        <begin position="1"/>
        <end position="232"/>
    </location>
</feature>